<accession>A5FWG7</accession>
<dbReference type="EC" id="2.7.1.170" evidence="1"/>
<dbReference type="EMBL" id="CP000697">
    <property type="protein sequence ID" value="ABQ29949.1"/>
    <property type="molecule type" value="Genomic_DNA"/>
</dbReference>
<dbReference type="RefSeq" id="WP_011941731.1">
    <property type="nucleotide sequence ID" value="NC_009484.1"/>
</dbReference>
<dbReference type="SMR" id="A5FWG7"/>
<dbReference type="STRING" id="349163.Acry_0728"/>
<dbReference type="KEGG" id="acr:Acry_0728"/>
<dbReference type="eggNOG" id="COG2377">
    <property type="taxonomic scope" value="Bacteria"/>
</dbReference>
<dbReference type="HOGENOM" id="CLU_038782_3_0_5"/>
<dbReference type="UniPathway" id="UPA00343"/>
<dbReference type="UniPathway" id="UPA00544"/>
<dbReference type="Proteomes" id="UP000000245">
    <property type="component" value="Chromosome"/>
</dbReference>
<dbReference type="GO" id="GO:0005524">
    <property type="term" value="F:ATP binding"/>
    <property type="evidence" value="ECO:0007669"/>
    <property type="project" value="UniProtKB-UniRule"/>
</dbReference>
<dbReference type="GO" id="GO:0016301">
    <property type="term" value="F:kinase activity"/>
    <property type="evidence" value="ECO:0007669"/>
    <property type="project" value="UniProtKB-KW"/>
</dbReference>
<dbReference type="GO" id="GO:0016773">
    <property type="term" value="F:phosphotransferase activity, alcohol group as acceptor"/>
    <property type="evidence" value="ECO:0007669"/>
    <property type="project" value="UniProtKB-UniRule"/>
</dbReference>
<dbReference type="GO" id="GO:0097175">
    <property type="term" value="P:1,6-anhydro-N-acetyl-beta-muramic acid catabolic process"/>
    <property type="evidence" value="ECO:0007669"/>
    <property type="project" value="UniProtKB-UniRule"/>
</dbReference>
<dbReference type="GO" id="GO:0006040">
    <property type="term" value="P:amino sugar metabolic process"/>
    <property type="evidence" value="ECO:0007669"/>
    <property type="project" value="InterPro"/>
</dbReference>
<dbReference type="GO" id="GO:0009254">
    <property type="term" value="P:peptidoglycan turnover"/>
    <property type="evidence" value="ECO:0007669"/>
    <property type="project" value="UniProtKB-UniRule"/>
</dbReference>
<dbReference type="Gene3D" id="3.30.420.40">
    <property type="match status" value="2"/>
</dbReference>
<dbReference type="HAMAP" id="MF_01270">
    <property type="entry name" value="AnhMurNAc_kinase"/>
    <property type="match status" value="1"/>
</dbReference>
<dbReference type="InterPro" id="IPR005338">
    <property type="entry name" value="Anhydro_N_Ac-Mur_kinase"/>
</dbReference>
<dbReference type="InterPro" id="IPR043129">
    <property type="entry name" value="ATPase_NBD"/>
</dbReference>
<dbReference type="NCBIfam" id="NF007141">
    <property type="entry name" value="PRK09585.1-5"/>
    <property type="match status" value="1"/>
</dbReference>
<dbReference type="PANTHER" id="PTHR30605">
    <property type="entry name" value="ANHYDRO-N-ACETYLMURAMIC ACID KINASE"/>
    <property type="match status" value="1"/>
</dbReference>
<dbReference type="PANTHER" id="PTHR30605:SF0">
    <property type="entry name" value="ANHYDRO-N-ACETYLMURAMIC ACID KINASE"/>
    <property type="match status" value="1"/>
</dbReference>
<dbReference type="Pfam" id="PF03702">
    <property type="entry name" value="AnmK"/>
    <property type="match status" value="1"/>
</dbReference>
<dbReference type="SUPFAM" id="SSF53067">
    <property type="entry name" value="Actin-like ATPase domain"/>
    <property type="match status" value="1"/>
</dbReference>
<comment type="function">
    <text evidence="1">Catalyzes the specific phosphorylation of 1,6-anhydro-N-acetylmuramic acid (anhMurNAc) with the simultaneous cleavage of the 1,6-anhydro ring, generating MurNAc-6-P. Is required for the utilization of anhMurNAc either imported from the medium or derived from its own cell wall murein, and thus plays a role in cell wall recycling.</text>
</comment>
<comment type="catalytic activity">
    <reaction evidence="1">
        <text>1,6-anhydro-N-acetyl-beta-muramate + ATP + H2O = N-acetyl-D-muramate 6-phosphate + ADP + H(+)</text>
        <dbReference type="Rhea" id="RHEA:24952"/>
        <dbReference type="ChEBI" id="CHEBI:15377"/>
        <dbReference type="ChEBI" id="CHEBI:15378"/>
        <dbReference type="ChEBI" id="CHEBI:30616"/>
        <dbReference type="ChEBI" id="CHEBI:58690"/>
        <dbReference type="ChEBI" id="CHEBI:58722"/>
        <dbReference type="ChEBI" id="CHEBI:456216"/>
        <dbReference type="EC" id="2.7.1.170"/>
    </reaction>
</comment>
<comment type="pathway">
    <text evidence="1">Amino-sugar metabolism; 1,6-anhydro-N-acetylmuramate degradation.</text>
</comment>
<comment type="pathway">
    <text evidence="1">Cell wall biogenesis; peptidoglycan recycling.</text>
</comment>
<comment type="similarity">
    <text evidence="1">Belongs to the anhydro-N-acetylmuramic acid kinase family.</text>
</comment>
<sequence length="358" mass="37123">MHAIGLMSGTSLDGVDAAVIETDGERVFGTGRSATLFYEDGLRARLRALLDAAPGLAPDDPELLSLDWLLADRHAEAVAMVASRADVVGFHGQTILHDPDRRRTWQIGDAAHLAHKTRLPVVHDFRSADVAAGGQGAPLAPLFHAALAEALEKPLLVVNIGGVANITWLGPTGEVLACDTGPGNGPLDDWVRLHTGAAFDADGALAAAGRVDQARLTRLMDDPWFARPAPKSLDRLQFSARVAAATEGLSAADGAALLVAFTAAAIAAAPLPAPPRRVLVAGGGRHNAAIMDALRRHFAAPVEPVEAVGWDGDALEAQCFGFLAVRALRGLPLSLPETTGVPAPLAGGRIVRPGPAAE</sequence>
<reference key="1">
    <citation type="submission" date="2007-05" db="EMBL/GenBank/DDBJ databases">
        <title>Complete sequence of chromosome of Acidiphilium cryptum JF-5.</title>
        <authorList>
            <consortium name="US DOE Joint Genome Institute"/>
            <person name="Copeland A."/>
            <person name="Lucas S."/>
            <person name="Lapidus A."/>
            <person name="Barry K."/>
            <person name="Detter J.C."/>
            <person name="Glavina del Rio T."/>
            <person name="Hammon N."/>
            <person name="Israni S."/>
            <person name="Dalin E."/>
            <person name="Tice H."/>
            <person name="Pitluck S."/>
            <person name="Sims D."/>
            <person name="Brettin T."/>
            <person name="Bruce D."/>
            <person name="Han C."/>
            <person name="Schmutz J."/>
            <person name="Larimer F."/>
            <person name="Land M."/>
            <person name="Hauser L."/>
            <person name="Kyrpides N."/>
            <person name="Kim E."/>
            <person name="Magnuson T."/>
            <person name="Richardson P."/>
        </authorList>
    </citation>
    <scope>NUCLEOTIDE SEQUENCE [LARGE SCALE GENOMIC DNA]</scope>
    <source>
        <strain>JF-5</strain>
    </source>
</reference>
<gene>
    <name evidence="1" type="primary">anmK</name>
    <name type="ordered locus">Acry_0728</name>
</gene>
<feature type="chain" id="PRO_1000165148" description="Anhydro-N-acetylmuramic acid kinase">
    <location>
        <begin position="1"/>
        <end position="358"/>
    </location>
</feature>
<feature type="binding site" evidence="1">
    <location>
        <begin position="9"/>
        <end position="16"/>
    </location>
    <ligand>
        <name>ATP</name>
        <dbReference type="ChEBI" id="CHEBI:30616"/>
    </ligand>
</feature>
<protein>
    <recommendedName>
        <fullName evidence="1">Anhydro-N-acetylmuramic acid kinase</fullName>
        <ecNumber evidence="1">2.7.1.170</ecNumber>
    </recommendedName>
    <alternativeName>
        <fullName evidence="1">AnhMurNAc kinase</fullName>
    </alternativeName>
</protein>
<organism>
    <name type="scientific">Acidiphilium cryptum (strain JF-5)</name>
    <dbReference type="NCBI Taxonomy" id="349163"/>
    <lineage>
        <taxon>Bacteria</taxon>
        <taxon>Pseudomonadati</taxon>
        <taxon>Pseudomonadota</taxon>
        <taxon>Alphaproteobacteria</taxon>
        <taxon>Acetobacterales</taxon>
        <taxon>Acidocellaceae</taxon>
        <taxon>Acidiphilium</taxon>
    </lineage>
</organism>
<evidence type="ECO:0000255" key="1">
    <source>
        <dbReference type="HAMAP-Rule" id="MF_01270"/>
    </source>
</evidence>
<name>ANMK_ACICJ</name>
<proteinExistence type="inferred from homology"/>
<keyword id="KW-0067">ATP-binding</keyword>
<keyword id="KW-0119">Carbohydrate metabolism</keyword>
<keyword id="KW-0418">Kinase</keyword>
<keyword id="KW-0547">Nucleotide-binding</keyword>
<keyword id="KW-1185">Reference proteome</keyword>
<keyword id="KW-0808">Transferase</keyword>